<evidence type="ECO:0000255" key="1">
    <source>
        <dbReference type="HAMAP-Rule" id="MF_00577"/>
    </source>
</evidence>
<dbReference type="EC" id="4.2.1.49" evidence="1"/>
<dbReference type="EMBL" id="CP001176">
    <property type="protein sequence ID" value="ACK59417.1"/>
    <property type="molecule type" value="Genomic_DNA"/>
</dbReference>
<dbReference type="RefSeq" id="WP_000416944.1">
    <property type="nucleotide sequence ID" value="NZ_VEHB01000002.1"/>
</dbReference>
<dbReference type="SMR" id="B7HCC9"/>
<dbReference type="KEGG" id="bcb:BCB4264_A3759"/>
<dbReference type="HOGENOM" id="CLU_018868_0_1_9"/>
<dbReference type="UniPathway" id="UPA00379">
    <property type="reaction ID" value="UER00550"/>
</dbReference>
<dbReference type="Proteomes" id="UP000007096">
    <property type="component" value="Chromosome"/>
</dbReference>
<dbReference type="GO" id="GO:0005737">
    <property type="term" value="C:cytoplasm"/>
    <property type="evidence" value="ECO:0007669"/>
    <property type="project" value="UniProtKB-SubCell"/>
</dbReference>
<dbReference type="GO" id="GO:0016153">
    <property type="term" value="F:urocanate hydratase activity"/>
    <property type="evidence" value="ECO:0007669"/>
    <property type="project" value="UniProtKB-UniRule"/>
</dbReference>
<dbReference type="GO" id="GO:0019556">
    <property type="term" value="P:L-histidine catabolic process to glutamate and formamide"/>
    <property type="evidence" value="ECO:0007669"/>
    <property type="project" value="UniProtKB-UniPathway"/>
</dbReference>
<dbReference type="GO" id="GO:0019557">
    <property type="term" value="P:L-histidine catabolic process to glutamate and formate"/>
    <property type="evidence" value="ECO:0007669"/>
    <property type="project" value="UniProtKB-UniPathway"/>
</dbReference>
<dbReference type="FunFam" id="3.40.50.10730:FF:000001">
    <property type="entry name" value="Urocanate hydratase"/>
    <property type="match status" value="1"/>
</dbReference>
<dbReference type="Gene3D" id="3.40.50.10730">
    <property type="entry name" value="Urocanase like domains"/>
    <property type="match status" value="1"/>
</dbReference>
<dbReference type="Gene3D" id="3.40.1770.10">
    <property type="entry name" value="Urocanase superfamily"/>
    <property type="match status" value="1"/>
</dbReference>
<dbReference type="HAMAP" id="MF_00577">
    <property type="entry name" value="HutU"/>
    <property type="match status" value="1"/>
</dbReference>
<dbReference type="InterPro" id="IPR055351">
    <property type="entry name" value="Urocanase"/>
</dbReference>
<dbReference type="InterPro" id="IPR023637">
    <property type="entry name" value="Urocanase-like"/>
</dbReference>
<dbReference type="InterPro" id="IPR035401">
    <property type="entry name" value="Urocanase_C"/>
</dbReference>
<dbReference type="InterPro" id="IPR038364">
    <property type="entry name" value="Urocanase_central_sf"/>
</dbReference>
<dbReference type="InterPro" id="IPR023636">
    <property type="entry name" value="Urocanase_CS"/>
</dbReference>
<dbReference type="InterPro" id="IPR035400">
    <property type="entry name" value="Urocanase_N"/>
</dbReference>
<dbReference type="InterPro" id="IPR035085">
    <property type="entry name" value="Urocanase_Rossmann-like"/>
</dbReference>
<dbReference type="InterPro" id="IPR036190">
    <property type="entry name" value="Urocanase_sf"/>
</dbReference>
<dbReference type="NCBIfam" id="TIGR01228">
    <property type="entry name" value="hutU"/>
    <property type="match status" value="1"/>
</dbReference>
<dbReference type="NCBIfam" id="NF003820">
    <property type="entry name" value="PRK05414.1"/>
    <property type="match status" value="1"/>
</dbReference>
<dbReference type="PANTHER" id="PTHR12216">
    <property type="entry name" value="UROCANATE HYDRATASE"/>
    <property type="match status" value="1"/>
</dbReference>
<dbReference type="PANTHER" id="PTHR12216:SF4">
    <property type="entry name" value="UROCANATE HYDRATASE"/>
    <property type="match status" value="1"/>
</dbReference>
<dbReference type="Pfam" id="PF01175">
    <property type="entry name" value="Urocanase"/>
    <property type="match status" value="1"/>
</dbReference>
<dbReference type="Pfam" id="PF17392">
    <property type="entry name" value="Urocanase_C"/>
    <property type="match status" value="1"/>
</dbReference>
<dbReference type="Pfam" id="PF17391">
    <property type="entry name" value="Urocanase_N"/>
    <property type="match status" value="1"/>
</dbReference>
<dbReference type="PIRSF" id="PIRSF001423">
    <property type="entry name" value="Urocanate_hydrat"/>
    <property type="match status" value="1"/>
</dbReference>
<dbReference type="SUPFAM" id="SSF111326">
    <property type="entry name" value="Urocanase"/>
    <property type="match status" value="1"/>
</dbReference>
<dbReference type="PROSITE" id="PS01233">
    <property type="entry name" value="UROCANASE"/>
    <property type="match status" value="1"/>
</dbReference>
<organism>
    <name type="scientific">Bacillus cereus (strain B4264)</name>
    <dbReference type="NCBI Taxonomy" id="405532"/>
    <lineage>
        <taxon>Bacteria</taxon>
        <taxon>Bacillati</taxon>
        <taxon>Bacillota</taxon>
        <taxon>Bacilli</taxon>
        <taxon>Bacillales</taxon>
        <taxon>Bacillaceae</taxon>
        <taxon>Bacillus</taxon>
        <taxon>Bacillus cereus group</taxon>
    </lineage>
</organism>
<proteinExistence type="inferred from homology"/>
<protein>
    <recommendedName>
        <fullName evidence="1">Urocanate hydratase</fullName>
        <shortName evidence="1">Urocanase</shortName>
        <ecNumber evidence="1">4.2.1.49</ecNumber>
    </recommendedName>
    <alternativeName>
        <fullName evidence="1">Imidazolonepropionate hydrolase</fullName>
    </alternativeName>
</protein>
<name>HUTU_BACC4</name>
<comment type="function">
    <text evidence="1">Catalyzes the conversion of urocanate to 4-imidazolone-5-propionate.</text>
</comment>
<comment type="catalytic activity">
    <reaction evidence="1">
        <text>4-imidazolone-5-propanoate = trans-urocanate + H2O</text>
        <dbReference type="Rhea" id="RHEA:13101"/>
        <dbReference type="ChEBI" id="CHEBI:15377"/>
        <dbReference type="ChEBI" id="CHEBI:17771"/>
        <dbReference type="ChEBI" id="CHEBI:77893"/>
        <dbReference type="EC" id="4.2.1.49"/>
    </reaction>
</comment>
<comment type="cofactor">
    <cofactor evidence="1">
        <name>NAD(+)</name>
        <dbReference type="ChEBI" id="CHEBI:57540"/>
    </cofactor>
    <text evidence="1">Binds 1 NAD(+) per subunit.</text>
</comment>
<comment type="pathway">
    <text evidence="1">Amino-acid degradation; L-histidine degradation into L-glutamate; N-formimidoyl-L-glutamate from L-histidine: step 2/3.</text>
</comment>
<comment type="subcellular location">
    <subcellularLocation>
        <location evidence="1">Cytoplasm</location>
    </subcellularLocation>
</comment>
<comment type="similarity">
    <text evidence="1">Belongs to the urocanase family.</text>
</comment>
<feature type="chain" id="PRO_1000129559" description="Urocanate hydratase">
    <location>
        <begin position="1"/>
        <end position="552"/>
    </location>
</feature>
<feature type="active site" evidence="1">
    <location>
        <position position="407"/>
    </location>
</feature>
<feature type="binding site" evidence="1">
    <location>
        <begin position="49"/>
        <end position="50"/>
    </location>
    <ligand>
        <name>NAD(+)</name>
        <dbReference type="ChEBI" id="CHEBI:57540"/>
    </ligand>
</feature>
<feature type="binding site" evidence="1">
    <location>
        <position position="127"/>
    </location>
    <ligand>
        <name>NAD(+)</name>
        <dbReference type="ChEBI" id="CHEBI:57540"/>
    </ligand>
</feature>
<feature type="binding site" evidence="1">
    <location>
        <begin position="173"/>
        <end position="175"/>
    </location>
    <ligand>
        <name>NAD(+)</name>
        <dbReference type="ChEBI" id="CHEBI:57540"/>
    </ligand>
</feature>
<feature type="binding site" evidence="1">
    <location>
        <position position="193"/>
    </location>
    <ligand>
        <name>NAD(+)</name>
        <dbReference type="ChEBI" id="CHEBI:57540"/>
    </ligand>
</feature>
<feature type="binding site" evidence="1">
    <location>
        <begin position="239"/>
        <end position="240"/>
    </location>
    <ligand>
        <name>NAD(+)</name>
        <dbReference type="ChEBI" id="CHEBI:57540"/>
    </ligand>
</feature>
<feature type="binding site" evidence="1">
    <location>
        <begin position="260"/>
        <end position="264"/>
    </location>
    <ligand>
        <name>NAD(+)</name>
        <dbReference type="ChEBI" id="CHEBI:57540"/>
    </ligand>
</feature>
<feature type="binding site" evidence="1">
    <location>
        <begin position="270"/>
        <end position="271"/>
    </location>
    <ligand>
        <name>NAD(+)</name>
        <dbReference type="ChEBI" id="CHEBI:57540"/>
    </ligand>
</feature>
<feature type="binding site" evidence="1">
    <location>
        <position position="319"/>
    </location>
    <ligand>
        <name>NAD(+)</name>
        <dbReference type="ChEBI" id="CHEBI:57540"/>
    </ligand>
</feature>
<feature type="binding site" evidence="1">
    <location>
        <position position="489"/>
    </location>
    <ligand>
        <name>NAD(+)</name>
        <dbReference type="ChEBI" id="CHEBI:57540"/>
    </ligand>
</feature>
<keyword id="KW-0963">Cytoplasm</keyword>
<keyword id="KW-0369">Histidine metabolism</keyword>
<keyword id="KW-0456">Lyase</keyword>
<keyword id="KW-0520">NAD</keyword>
<gene>
    <name evidence="1" type="primary">hutU</name>
    <name type="ordered locus">BCB4264_A3759</name>
</gene>
<sequence>MEKVQQTIRAPRGTELQTKGWVQEAALRMLMNNLDPEVAEKPEELVVYGGIGRAARNWESYQAIVDSLKTLESDETLLVQSGKPVAIFKSHEDAPRVLLANSNLVPKWANWDHFRELEKKGLMMYGQMTAGSWIYIGTQGILQGTYETFGEAARQHFDGSLKGTLTLTAGLGGMGGAQPLAVTMNGGVVIAIDVDKRSIDRRIEKRYCDMYTESLEEALTVANEYKEKKEPISIGLLGNAAEILPELVKRDITPDLVTDQTSAHDPLNGYIPVGYTLEEAAKLREKDPERYVQLSKESMTKHVEAMLAMQEKGAITFDYGNNIRQVAFDEGLKNAFDFPGFVPAFIRPLFCEGKGPFRWVALSGDPEDIYKTDEVILREFADNEHLCNWIRMARQQVEFQGLPSRICWLGYGERAKFGRIINEMVANGELSAPIVIGRDHLDCGSVASPNRETEAMKDGSDAVADWPILNALINSVNGASWVSVHHGGGVGMGYSLHAGMVIVADGTEAAAKRIERVLTSDPGMGVVRHVDAGYDLAVETAKEKGVNIPMMK</sequence>
<accession>B7HCC9</accession>
<reference key="1">
    <citation type="submission" date="2008-10" db="EMBL/GenBank/DDBJ databases">
        <title>Genome sequence of Bacillus cereus B4264.</title>
        <authorList>
            <person name="Dodson R.J."/>
            <person name="Durkin A.S."/>
            <person name="Rosovitz M.J."/>
            <person name="Rasko D.A."/>
            <person name="Hoffmaster A."/>
            <person name="Ravel J."/>
            <person name="Sutton G."/>
        </authorList>
    </citation>
    <scope>NUCLEOTIDE SEQUENCE [LARGE SCALE GENOMIC DNA]</scope>
    <source>
        <strain>B4264</strain>
    </source>
</reference>